<sequence length="459" mass="49344">MGINNPIPRSLKSETKKAAKILASFVKPNQVFGADQVIPPDVLKRAKGLAIITILKAGFLFSGRAGSGVIVARLKDGTWSAPSAIAMAGAGAGGMVGIELTDFVFILNTQDAVKSFSEFGTITLGGNVSVSAGPLGRSAEAAASASAGGVAAVFAYSKSKGLFAGVSVEGSAIIERREANRKFYGDNCTAKMILSGRIRPPPAVDPLFRVLESRAFNYRPSNGGRGSFDDDEDDYYDDDDYYNDIPSSFSSTDASSTRPNTRSTRRRAQSGSRYTFDDDDDDDDYGTGYSRNSRLAPTNSGGSGGKLDDPSGASSYYASHRRSGTAQSRARSSRNRWADDEYDDYDDDYESGYRRGNGRDRTKDREVDDLSNRFSKSRISSASTPQTSQGRFTAPTSPSTSSPKAVALYSFAGEESGDLPFRKGDVITILKKSDSQNDWWTGRVNGREGIFPANYVELV</sequence>
<feature type="chain" id="PRO_0000345086" description="LAS seventeen-binding protein 3">
    <location>
        <begin position="1"/>
        <end position="459"/>
    </location>
</feature>
<feature type="domain" description="SH3" evidence="3">
    <location>
        <begin position="400"/>
        <end position="459"/>
    </location>
</feature>
<feature type="region of interest" description="Disordered" evidence="4">
    <location>
        <begin position="219"/>
        <end position="403"/>
    </location>
</feature>
<feature type="compositionally biased region" description="Acidic residues" evidence="4">
    <location>
        <begin position="229"/>
        <end position="242"/>
    </location>
</feature>
<feature type="compositionally biased region" description="Low complexity" evidence="4">
    <location>
        <begin position="243"/>
        <end position="262"/>
    </location>
</feature>
<feature type="compositionally biased region" description="Polar residues" evidence="4">
    <location>
        <begin position="289"/>
        <end position="300"/>
    </location>
</feature>
<feature type="compositionally biased region" description="Acidic residues" evidence="4">
    <location>
        <begin position="340"/>
        <end position="350"/>
    </location>
</feature>
<feature type="compositionally biased region" description="Basic and acidic residues" evidence="4">
    <location>
        <begin position="351"/>
        <end position="371"/>
    </location>
</feature>
<feature type="compositionally biased region" description="Polar residues" evidence="4">
    <location>
        <begin position="372"/>
        <end position="391"/>
    </location>
</feature>
<feature type="compositionally biased region" description="Low complexity" evidence="4">
    <location>
        <begin position="393"/>
        <end position="403"/>
    </location>
</feature>
<feature type="modified residue" description="Phosphoserine" evidence="2">
    <location>
        <position position="227"/>
    </location>
</feature>
<feature type="modified residue" description="Phosphothreonine" evidence="2">
    <location>
        <position position="298"/>
    </location>
</feature>
<feature type="modified residue" description="Phosphoserine" evidence="2">
    <location>
        <position position="300"/>
    </location>
</feature>
<feature type="modified residue" description="Phosphoserine" evidence="2">
    <location>
        <position position="303"/>
    </location>
</feature>
<feature type="modified residue" description="Phosphothreonine" evidence="2">
    <location>
        <position position="393"/>
    </location>
</feature>
<feature type="modified residue" description="Phosphoserine" evidence="2">
    <location>
        <position position="397"/>
    </location>
</feature>
<feature type="modified residue" description="Phosphoserine" evidence="2">
    <location>
        <position position="402"/>
    </location>
</feature>
<feature type="modified residue" description="Phosphoserine" evidence="2">
    <location>
        <position position="416"/>
    </location>
</feature>
<proteinExistence type="inferred from homology"/>
<accession>A7A261</accession>
<name>LSB3_YEAS7</name>
<organism>
    <name type="scientific">Saccharomyces cerevisiae (strain YJM789)</name>
    <name type="common">Baker's yeast</name>
    <dbReference type="NCBI Taxonomy" id="307796"/>
    <lineage>
        <taxon>Eukaryota</taxon>
        <taxon>Fungi</taxon>
        <taxon>Dikarya</taxon>
        <taxon>Ascomycota</taxon>
        <taxon>Saccharomycotina</taxon>
        <taxon>Saccharomycetes</taxon>
        <taxon>Saccharomycetales</taxon>
        <taxon>Saccharomycetaceae</taxon>
        <taxon>Saccharomyces</taxon>
    </lineage>
</organism>
<reference key="1">
    <citation type="journal article" date="2007" name="Proc. Natl. Acad. Sci. U.S.A.">
        <title>Genome sequencing and comparative analysis of Saccharomyces cerevisiae strain YJM789.</title>
        <authorList>
            <person name="Wei W."/>
            <person name="McCusker J.H."/>
            <person name="Hyman R.W."/>
            <person name="Jones T."/>
            <person name="Ning Y."/>
            <person name="Cao Z."/>
            <person name="Gu Z."/>
            <person name="Bruno D."/>
            <person name="Miranda M."/>
            <person name="Nguyen M."/>
            <person name="Wilhelmy J."/>
            <person name="Komp C."/>
            <person name="Tamse R."/>
            <person name="Wang X."/>
            <person name="Jia P."/>
            <person name="Luedi P."/>
            <person name="Oefner P.J."/>
            <person name="David L."/>
            <person name="Dietrich F.S."/>
            <person name="Li Y."/>
            <person name="Davis R.W."/>
            <person name="Steinmetz L.M."/>
        </authorList>
    </citation>
    <scope>NUCLEOTIDE SEQUENCE [LARGE SCALE GENOMIC DNA]</scope>
    <source>
        <strain>YJM789</strain>
    </source>
</reference>
<comment type="subunit">
    <text evidence="1">Interacts with LAS17.</text>
</comment>
<comment type="subcellular location">
    <subcellularLocation>
        <location evidence="1">Cytoplasm</location>
    </subcellularLocation>
</comment>
<comment type="PTM">
    <text evidence="1">Phosphorylation of Ser-397 is induced 2-fold in response to mating pheromone.</text>
</comment>
<comment type="similarity">
    <text evidence="5">Belongs to the SH3YL1 family.</text>
</comment>
<comment type="sequence caution" evidence="5">
    <conflict type="erroneous gene model prediction">
        <sequence resource="EMBL-CDS" id="EDN59172"/>
    </conflict>
</comment>
<evidence type="ECO:0000250" key="1"/>
<evidence type="ECO:0000250" key="2">
    <source>
        <dbReference type="UniProtKB" id="P43603"/>
    </source>
</evidence>
<evidence type="ECO:0000255" key="3">
    <source>
        <dbReference type="PROSITE-ProRule" id="PRU00192"/>
    </source>
</evidence>
<evidence type="ECO:0000256" key="4">
    <source>
        <dbReference type="SAM" id="MobiDB-lite"/>
    </source>
</evidence>
<evidence type="ECO:0000305" key="5"/>
<dbReference type="EMBL" id="AAFW02000176">
    <property type="protein sequence ID" value="EDN59172.1"/>
    <property type="status" value="ALT_SEQ"/>
    <property type="molecule type" value="Genomic_DNA"/>
</dbReference>
<dbReference type="SMR" id="A7A261"/>
<dbReference type="HOGENOM" id="CLU_015320_2_0_1"/>
<dbReference type="OrthoDB" id="39651at4893"/>
<dbReference type="Proteomes" id="UP000007060">
    <property type="component" value="Unassembled WGS sequence"/>
</dbReference>
<dbReference type="GO" id="GO:0030479">
    <property type="term" value="C:actin cortical patch"/>
    <property type="evidence" value="ECO:0007669"/>
    <property type="project" value="TreeGrafter"/>
</dbReference>
<dbReference type="GO" id="GO:0051015">
    <property type="term" value="F:actin filament binding"/>
    <property type="evidence" value="ECO:0007669"/>
    <property type="project" value="TreeGrafter"/>
</dbReference>
<dbReference type="GO" id="GO:0035091">
    <property type="term" value="F:phosphatidylinositol binding"/>
    <property type="evidence" value="ECO:0007669"/>
    <property type="project" value="TreeGrafter"/>
</dbReference>
<dbReference type="GO" id="GO:0051666">
    <property type="term" value="P:actin cortical patch localization"/>
    <property type="evidence" value="ECO:0007669"/>
    <property type="project" value="TreeGrafter"/>
</dbReference>
<dbReference type="GO" id="GO:0051017">
    <property type="term" value="P:actin filament bundle assembly"/>
    <property type="evidence" value="ECO:0007669"/>
    <property type="project" value="TreeGrafter"/>
</dbReference>
<dbReference type="CDD" id="cd11842">
    <property type="entry name" value="SH3_Ysc84p_like"/>
    <property type="match status" value="1"/>
</dbReference>
<dbReference type="CDD" id="cd11525">
    <property type="entry name" value="SYLF_SH3YL1_like"/>
    <property type="match status" value="1"/>
</dbReference>
<dbReference type="FunFam" id="2.30.30.40:FF:000100">
    <property type="entry name" value="SH3 domain-containing YSC84-like protein 1"/>
    <property type="match status" value="1"/>
</dbReference>
<dbReference type="Gene3D" id="2.30.30.40">
    <property type="entry name" value="SH3 Domains"/>
    <property type="match status" value="1"/>
</dbReference>
<dbReference type="InterPro" id="IPR036028">
    <property type="entry name" value="SH3-like_dom_sf"/>
</dbReference>
<dbReference type="InterPro" id="IPR001452">
    <property type="entry name" value="SH3_domain"/>
</dbReference>
<dbReference type="InterPro" id="IPR051702">
    <property type="entry name" value="SH3_domain_YSC84-like"/>
</dbReference>
<dbReference type="InterPro" id="IPR033643">
    <property type="entry name" value="SYLF_SH3YL1-like"/>
</dbReference>
<dbReference type="InterPro" id="IPR007461">
    <property type="entry name" value="Ysc84_actin-binding"/>
</dbReference>
<dbReference type="PANTHER" id="PTHR15629:SF2">
    <property type="entry name" value="SH3 DOMAIN-CONTAINING YSC84-LIKE PROTEIN 1"/>
    <property type="match status" value="1"/>
</dbReference>
<dbReference type="PANTHER" id="PTHR15629">
    <property type="entry name" value="SH3YL1 PROTEIN"/>
    <property type="match status" value="1"/>
</dbReference>
<dbReference type="Pfam" id="PF00018">
    <property type="entry name" value="SH3_1"/>
    <property type="match status" value="1"/>
</dbReference>
<dbReference type="Pfam" id="PF04366">
    <property type="entry name" value="Ysc84"/>
    <property type="match status" value="1"/>
</dbReference>
<dbReference type="PRINTS" id="PR00452">
    <property type="entry name" value="SH3DOMAIN"/>
</dbReference>
<dbReference type="SMART" id="SM00326">
    <property type="entry name" value="SH3"/>
    <property type="match status" value="1"/>
</dbReference>
<dbReference type="SUPFAM" id="SSF50044">
    <property type="entry name" value="SH3-domain"/>
    <property type="match status" value="1"/>
</dbReference>
<dbReference type="PROSITE" id="PS50002">
    <property type="entry name" value="SH3"/>
    <property type="match status" value="1"/>
</dbReference>
<gene>
    <name type="primary">LSB3</name>
    <name type="ORF">SCY_1771</name>
</gene>
<protein>
    <recommendedName>
        <fullName>LAS seventeen-binding protein 3</fullName>
        <shortName>LAS17-binding protein 3</shortName>
    </recommendedName>
</protein>
<keyword id="KW-0963">Cytoplasm</keyword>
<keyword id="KW-0597">Phosphoprotein</keyword>
<keyword id="KW-0728">SH3 domain</keyword>